<feature type="chain" id="PRO_1000206023" description="Pyrrolidone-carboxylate peptidase">
    <location>
        <begin position="1"/>
        <end position="213"/>
    </location>
</feature>
<feature type="active site" evidence="1">
    <location>
        <position position="81"/>
    </location>
</feature>
<feature type="active site" evidence="1">
    <location>
        <position position="144"/>
    </location>
</feature>
<feature type="active site" evidence="1">
    <location>
        <position position="166"/>
    </location>
</feature>
<reference key="1">
    <citation type="journal article" date="2009" name="Genome Biol.">
        <title>Genomic and genetic analyses of diversity and plant interactions of Pseudomonas fluorescens.</title>
        <authorList>
            <person name="Silby M.W."/>
            <person name="Cerdeno-Tarraga A.M."/>
            <person name="Vernikos G.S."/>
            <person name="Giddens S.R."/>
            <person name="Jackson R.W."/>
            <person name="Preston G.M."/>
            <person name="Zhang X.-X."/>
            <person name="Moon C.D."/>
            <person name="Gehrig S.M."/>
            <person name="Godfrey S.A.C."/>
            <person name="Knight C.G."/>
            <person name="Malone J.G."/>
            <person name="Robinson Z."/>
            <person name="Spiers A.J."/>
            <person name="Harris S."/>
            <person name="Challis G.L."/>
            <person name="Yaxley A.M."/>
            <person name="Harris D."/>
            <person name="Seeger K."/>
            <person name="Murphy L."/>
            <person name="Rutter S."/>
            <person name="Squares R."/>
            <person name="Quail M.A."/>
            <person name="Saunders E."/>
            <person name="Mavromatis K."/>
            <person name="Brettin T.S."/>
            <person name="Bentley S.D."/>
            <person name="Hothersall J."/>
            <person name="Stephens E."/>
            <person name="Thomas C.M."/>
            <person name="Parkhill J."/>
            <person name="Levy S.B."/>
            <person name="Rainey P.B."/>
            <person name="Thomson N.R."/>
        </authorList>
    </citation>
    <scope>NUCLEOTIDE SEQUENCE [LARGE SCALE GENOMIC DNA]</scope>
    <source>
        <strain>SBW25</strain>
    </source>
</reference>
<comment type="function">
    <text evidence="1">Removes 5-oxoproline from various penultimate amino acid residues except L-proline.</text>
</comment>
<comment type="catalytic activity">
    <reaction evidence="1">
        <text>Release of an N-terminal pyroglutamyl group from a polypeptide, the second amino acid generally not being Pro.</text>
        <dbReference type="EC" id="3.4.19.3"/>
    </reaction>
</comment>
<comment type="subunit">
    <text evidence="1">Homotetramer.</text>
</comment>
<comment type="subcellular location">
    <subcellularLocation>
        <location evidence="1">Cytoplasm</location>
    </subcellularLocation>
</comment>
<comment type="similarity">
    <text evidence="1">Belongs to the peptidase C15 family.</text>
</comment>
<gene>
    <name evidence="1" type="primary">pcp</name>
    <name type="ordered locus">PFLU_4174</name>
</gene>
<keyword id="KW-0963">Cytoplasm</keyword>
<keyword id="KW-0378">Hydrolase</keyword>
<keyword id="KW-0645">Protease</keyword>
<keyword id="KW-0788">Thiol protease</keyword>
<name>PCP_PSEFS</name>
<accession>C3JZR3</accession>
<dbReference type="EC" id="3.4.19.3" evidence="1"/>
<dbReference type="EMBL" id="AM181176">
    <property type="protein sequence ID" value="CAY50685.1"/>
    <property type="molecule type" value="Genomic_DNA"/>
</dbReference>
<dbReference type="RefSeq" id="WP_015884958.1">
    <property type="nucleotide sequence ID" value="NC_012660.1"/>
</dbReference>
<dbReference type="SMR" id="C3JZR3"/>
<dbReference type="MEROPS" id="C15.001"/>
<dbReference type="PATRIC" id="fig|216595.4.peg.4318"/>
<dbReference type="eggNOG" id="COG2039">
    <property type="taxonomic scope" value="Bacteria"/>
</dbReference>
<dbReference type="HOGENOM" id="CLU_043960_4_0_6"/>
<dbReference type="OrthoDB" id="9779738at2"/>
<dbReference type="GO" id="GO:0005829">
    <property type="term" value="C:cytosol"/>
    <property type="evidence" value="ECO:0007669"/>
    <property type="project" value="InterPro"/>
</dbReference>
<dbReference type="GO" id="GO:0016920">
    <property type="term" value="F:pyroglutamyl-peptidase activity"/>
    <property type="evidence" value="ECO:0007669"/>
    <property type="project" value="UniProtKB-UniRule"/>
</dbReference>
<dbReference type="GO" id="GO:0006508">
    <property type="term" value="P:proteolysis"/>
    <property type="evidence" value="ECO:0007669"/>
    <property type="project" value="UniProtKB-KW"/>
</dbReference>
<dbReference type="CDD" id="cd00501">
    <property type="entry name" value="Peptidase_C15"/>
    <property type="match status" value="1"/>
</dbReference>
<dbReference type="FunFam" id="3.40.630.20:FF:000001">
    <property type="entry name" value="Pyrrolidone-carboxylate peptidase"/>
    <property type="match status" value="1"/>
</dbReference>
<dbReference type="Gene3D" id="3.40.630.20">
    <property type="entry name" value="Peptidase C15, pyroglutamyl peptidase I-like"/>
    <property type="match status" value="1"/>
</dbReference>
<dbReference type="HAMAP" id="MF_00417">
    <property type="entry name" value="Pyrrolid_peptidase"/>
    <property type="match status" value="1"/>
</dbReference>
<dbReference type="InterPro" id="IPR000816">
    <property type="entry name" value="Peptidase_C15"/>
</dbReference>
<dbReference type="InterPro" id="IPR016125">
    <property type="entry name" value="Peptidase_C15-like"/>
</dbReference>
<dbReference type="InterPro" id="IPR036440">
    <property type="entry name" value="Peptidase_C15-like_sf"/>
</dbReference>
<dbReference type="InterPro" id="IPR029762">
    <property type="entry name" value="PGP-I_bact-type"/>
</dbReference>
<dbReference type="InterPro" id="IPR033694">
    <property type="entry name" value="PGPEP1_Cys_AS"/>
</dbReference>
<dbReference type="InterPro" id="IPR033693">
    <property type="entry name" value="PGPEP1_Glu_AS"/>
</dbReference>
<dbReference type="NCBIfam" id="NF009676">
    <property type="entry name" value="PRK13197.1"/>
    <property type="match status" value="1"/>
</dbReference>
<dbReference type="NCBIfam" id="TIGR00504">
    <property type="entry name" value="pyro_pdase"/>
    <property type="match status" value="1"/>
</dbReference>
<dbReference type="PANTHER" id="PTHR23402">
    <property type="entry name" value="PROTEASE FAMILY C15 PYROGLUTAMYL-PEPTIDASE I-RELATED"/>
    <property type="match status" value="1"/>
</dbReference>
<dbReference type="PANTHER" id="PTHR23402:SF1">
    <property type="entry name" value="PYROGLUTAMYL-PEPTIDASE I"/>
    <property type="match status" value="1"/>
</dbReference>
<dbReference type="Pfam" id="PF01470">
    <property type="entry name" value="Peptidase_C15"/>
    <property type="match status" value="1"/>
</dbReference>
<dbReference type="PIRSF" id="PIRSF015592">
    <property type="entry name" value="Prld-crbxl_pptds"/>
    <property type="match status" value="1"/>
</dbReference>
<dbReference type="PRINTS" id="PR00706">
    <property type="entry name" value="PYROGLUPTASE"/>
</dbReference>
<dbReference type="SUPFAM" id="SSF53182">
    <property type="entry name" value="Pyrrolidone carboxyl peptidase (pyroglutamate aminopeptidase)"/>
    <property type="match status" value="1"/>
</dbReference>
<dbReference type="PROSITE" id="PS01334">
    <property type="entry name" value="PYRASE_CYS"/>
    <property type="match status" value="1"/>
</dbReference>
<dbReference type="PROSITE" id="PS01333">
    <property type="entry name" value="PYRASE_GLU"/>
    <property type="match status" value="1"/>
</dbReference>
<organism>
    <name type="scientific">Pseudomonas fluorescens (strain SBW25)</name>
    <dbReference type="NCBI Taxonomy" id="216595"/>
    <lineage>
        <taxon>Bacteria</taxon>
        <taxon>Pseudomonadati</taxon>
        <taxon>Pseudomonadota</taxon>
        <taxon>Gammaproteobacteria</taxon>
        <taxon>Pseudomonadales</taxon>
        <taxon>Pseudomonadaceae</taxon>
        <taxon>Pseudomonas</taxon>
    </lineage>
</organism>
<proteinExistence type="inferred from homology"/>
<sequence length="213" mass="22547">MRIVLLTGFEPFDQDPVNPSWEAVRQLEGVQLADDVQIIARRLPCAFATAGARLAQLIDELHPEMVIATGLGPGRSDISIERVAINVNDARIPDNLGEQPIDTAVAPDGPAAYFTTLPIKAMVRAVRGAGIAASVSQTAGTFVCNQVFYLLQHALAATAVRSGFIHVPYLPEQVTGSQRPSMALETMVAGLHAAVLAAWQTPVDAKEAGGQVS</sequence>
<protein>
    <recommendedName>
        <fullName evidence="1">Pyrrolidone-carboxylate peptidase</fullName>
        <ecNumber evidence="1">3.4.19.3</ecNumber>
    </recommendedName>
    <alternativeName>
        <fullName evidence="1">5-oxoprolyl-peptidase</fullName>
    </alternativeName>
    <alternativeName>
        <fullName evidence="1">Pyroglutamyl-peptidase I</fullName>
        <shortName evidence="1">PGP-I</shortName>
        <shortName evidence="1">Pyrase</shortName>
    </alternativeName>
</protein>
<evidence type="ECO:0000255" key="1">
    <source>
        <dbReference type="HAMAP-Rule" id="MF_00417"/>
    </source>
</evidence>